<accession>P17595</accession>
<protein>
    <recommendedName>
        <fullName>Replication protein alpha-A</fullName>
    </recommendedName>
    <domain>
        <recommendedName>
            <fullName>Methyltransferase</fullName>
            <ecNumber>2.1.1.-</ecNumber>
        </recommendedName>
    </domain>
    <domain>
        <recommendedName>
            <fullName>NTPase/helicase</fullName>
            <ecNumber>3.6.4.13</ecNumber>
        </recommendedName>
    </domain>
</protein>
<proteinExistence type="evidence at protein level"/>
<name>ALPHA_BSMV</name>
<sequence length="1139" mass="129628">MASDEIVRNLISREEVMGNLISTASSSVRSPLHDVLCSHVRTIVDSVDKKAVSRKHEDVRRNISSEELQMLINAYPEYAVSSSACESGTHSMAACFRFLETEYLLDMVPMKETFVYDIGGNWFSHMKFRADREIHCCCPILSMRDSERLETRMMAMQKYMRGSKDKPLRLLSRYQNILREQAARTTAFMAGEVNAGVLDGDVFCENTFQDCVRRVPEGFLKTAIAVHSIYDIKVEEFASALKRKGITQAYGCFLFPPAVLIGQKEGILPSVDGHYLVENGRIKFFFANDPNAGYSHDLKDYLKYVEKTYVDIEDGVFAIELMQMRGDTMFFKITDVTAAMYHMKYRGMKRDETFKCIPLLKNSSVVVPLFSWDNRSLKITSGLLPRTLVEQGAAFIMKNKEKDLNVAVLKNYLSAVNNSYIFNGSQVRDGVKIAPDLISKLAVTLYLREKVYRQRENSIISYFEQEMLHDPNLKAMFGDFLWFVPNTLSSVWKNMRKSLMEWFGYAEFDLTTFDICDPVLYVEIVDRYKIIQKGRIPLGEFFDCHEECENYELREKEKNDLAVKMAQKVTGTVTECEKDLGPLVQPIKEILVQLVMPNLVRALCRPRSPTSPLDLKSIPGSTPSHSSSDSEHSMTEEASCTIAGSVPTWEIATRKDLTFQRIDEDMSRRTGMPPRPKVTSSYNMNARAEFLYYQLCSVICERAQILSVIEDFRQNLIFSDKVAVPLNARFYSFQSLRPGWVFKTPSHSEVGHSYAVHFDFKTIGTDLEESLAFCRMVPISWDKSGKYIATTPHFPERHGYYVICDNTKLCNNWLIYNKLVDVYALVADRPLRFELIDGVPGCGKSTMILNSCDIRREVVVGEGRNATDDLRERFKRKKNLNSKTANHRVRTLDSLLLAEGPCVPQADRFHFDEALKVHYGAIMFCADKLGASEILAQGDRAQLPMICRVEGIELQFQSPDYTKTIINPKLRSYRIPGDVAFYLSAKEFYKVKGIPQKVITSNSVKRSLYARGETTPERFVSLLDVPVRKDTHYLTFLQAEKESLMSHLIPKGVKKESISTIHEAQGGTYENVILVRLQRTPNEIYPGGPRSAPYIVVGTSRHTKTFTYCSVTDDKLLLDIADVGGIAHTPIRTFESHIV</sequence>
<keyword id="KW-0067">ATP-binding</keyword>
<keyword id="KW-0378">Hydrolase</keyword>
<keyword id="KW-0489">Methyltransferase</keyword>
<keyword id="KW-0547">Nucleotide-binding</keyword>
<keyword id="KW-1185">Reference proteome</keyword>
<keyword id="KW-0808">Transferase</keyword>
<feature type="chain" id="PRO_0000222492" description="Replication protein alpha-A">
    <location>
        <begin position="1"/>
        <end position="1139"/>
    </location>
</feature>
<feature type="domain" description="Alphavirus-like MT" evidence="2">
    <location>
        <begin position="81"/>
        <end position="305"/>
    </location>
</feature>
<feature type="domain" description="(+)RNA virus helicase ATP-binding">
    <location>
        <begin position="805"/>
        <end position="969"/>
    </location>
</feature>
<feature type="domain" description="(+)RNA virus helicase C-terminal">
    <location>
        <begin position="970"/>
        <end position="1139"/>
    </location>
</feature>
<feature type="region of interest" description="Methyltransferase" evidence="1">
    <location>
        <begin position="60"/>
        <end position="438"/>
    </location>
</feature>
<feature type="region of interest" description="Disordered" evidence="3">
    <location>
        <begin position="611"/>
        <end position="637"/>
    </location>
</feature>
<feature type="region of interest" description="Helicase" evidence="1">
    <location>
        <begin position="835"/>
        <end position="1109"/>
    </location>
</feature>
<feature type="compositionally biased region" description="Low complexity" evidence="3">
    <location>
        <begin position="617"/>
        <end position="627"/>
    </location>
</feature>
<feature type="binding site" evidence="1">
    <location>
        <begin position="838"/>
        <end position="845"/>
    </location>
    <ligand>
        <name>ATP</name>
        <dbReference type="ChEBI" id="CHEBI:30616"/>
    </ligand>
</feature>
<comment type="function">
    <text evidence="4 6">Probably contains methyltransferase and helicase activities (PubMed:2209552). Methyltransferase displays a cytoplasmic capping enzyme activity (Probable). This function is necessary since all viral RNAs are synthesized in the cytoplasm, and host capping enzymes are restricted to the nucleus (Probable). Helicase region probably exhibits NTPase and RNA unwinding activities (Probable).</text>
</comment>
<comment type="catalytic activity">
    <reaction>
        <text>ATP + H2O = ADP + phosphate + H(+)</text>
        <dbReference type="Rhea" id="RHEA:13065"/>
        <dbReference type="ChEBI" id="CHEBI:15377"/>
        <dbReference type="ChEBI" id="CHEBI:15378"/>
        <dbReference type="ChEBI" id="CHEBI:30616"/>
        <dbReference type="ChEBI" id="CHEBI:43474"/>
        <dbReference type="ChEBI" id="CHEBI:456216"/>
        <dbReference type="EC" id="3.6.4.13"/>
    </reaction>
</comment>
<comment type="subunit">
    <text evidence="5">Interacts with the suppressor of RNA silencing Gamma-B (via C-terminus).</text>
</comment>
<comment type="subcellular location">
    <subcellularLocation>
        <location evidence="5">Host chloroplast envelope</location>
    </subcellularLocation>
    <text evidence="5">The viral replication sites are located at the host chloroplast membrane.</text>
</comment>
<comment type="miscellaneous">
    <text evidence="6">The genome of this virus consists of three linear, positive, single-stranded RNAs encapsidated in separate virions designated RNA-alpha, RNA-beta and RNA-gamma. Three proteins (alpha-A, beta-A and gamma-A) are translated directly from these genomic RNAs and the remaining proteins encoded on RNA-beta (beta-B, beta-C and beta-D) and RNA-gamma (gamma-B) are expressed via three subgenomic messenger RNAs.</text>
</comment>
<reference key="1">
    <citation type="journal article" date="1989" name="Virology">
        <title>Nucleotide sequence of barley stripe mosaic virus RNA alpha: RNA alpha encodes a single polypeptide with homology to corresponding proteins from other viruses.</title>
        <authorList>
            <person name="Gustafson G."/>
            <person name="Armour S.L."/>
            <person name="Gamboa G.C."/>
            <person name="Burgett S.G."/>
            <person name="Shepherd J.W."/>
        </authorList>
    </citation>
    <scope>NUCLEOTIDE SEQUENCE [GENOMIC RNA]</scope>
    <source>
        <strain>ATCC PV43</strain>
    </source>
</reference>
<reference key="2">
    <citation type="journal article" date="1990" name="EMBO J.">
        <title>Identification of barley stripe mosaic virus genes involved in viral RNA replication and systemic movement.</title>
        <authorList>
            <person name="Petty I.T."/>
            <person name="French R."/>
            <person name="Jones R.W."/>
            <person name="Jackson A.O."/>
        </authorList>
    </citation>
    <scope>FUNCTION</scope>
</reference>
<reference key="3">
    <citation type="journal article" date="2017" name="PLoS Pathog.">
        <title>The Barley stripe mosaic virus gammab protein promotes chloroplast-targeted replication by enhancing unwinding of RNA duplexes.</title>
        <authorList>
            <person name="Zhang K."/>
            <person name="Zhang Y."/>
            <person name="Yang M."/>
            <person name="Liu S."/>
            <person name="Li Z."/>
            <person name="Wang X."/>
            <person name="Han C."/>
            <person name="Yu J."/>
            <person name="Li D."/>
        </authorList>
    </citation>
    <scope>SUBCELLULAR LOCATION</scope>
    <scope>INTERACTION WITH THE SUPPRESSOR OF RNA SILENCING GAMMA-B</scope>
</reference>
<organism>
    <name type="scientific">Barley stripe mosaic virus</name>
    <name type="common">BSMV</name>
    <dbReference type="NCBI Taxonomy" id="12327"/>
    <lineage>
        <taxon>Viruses</taxon>
        <taxon>Riboviria</taxon>
        <taxon>Orthornavirae</taxon>
        <taxon>Kitrinoviricota</taxon>
        <taxon>Alsuviricetes</taxon>
        <taxon>Martellivirales</taxon>
        <taxon>Virgaviridae</taxon>
        <taxon>Hordeivirus</taxon>
    </lineage>
</organism>
<evidence type="ECO:0000255" key="1"/>
<evidence type="ECO:0000255" key="2">
    <source>
        <dbReference type="PROSITE-ProRule" id="PRU01079"/>
    </source>
</evidence>
<evidence type="ECO:0000256" key="3">
    <source>
        <dbReference type="SAM" id="MobiDB-lite"/>
    </source>
</evidence>
<evidence type="ECO:0000269" key="4">
    <source>
    </source>
</evidence>
<evidence type="ECO:0000269" key="5">
    <source>
    </source>
</evidence>
<evidence type="ECO:0000305" key="6"/>
<organismHost>
    <name type="scientific">Hordeum vulgare</name>
    <name type="common">Barley</name>
    <dbReference type="NCBI Taxonomy" id="4513"/>
</organismHost>
<organismHost>
    <name type="scientific">Triticum aestivum</name>
    <name type="common">Wheat</name>
    <dbReference type="NCBI Taxonomy" id="4565"/>
</organismHost>
<dbReference type="EC" id="2.1.1.-"/>
<dbReference type="EC" id="3.6.4.13"/>
<dbReference type="EMBL" id="J04342">
    <property type="protein sequence ID" value="AAA46336.1"/>
    <property type="molecule type" value="Genomic_RNA"/>
</dbReference>
<dbReference type="PIR" id="JA0109">
    <property type="entry name" value="PAVBBS"/>
</dbReference>
<dbReference type="RefSeq" id="NP_604474.1">
    <property type="nucleotide sequence ID" value="NC_003469.1"/>
</dbReference>
<dbReference type="SMR" id="P17595"/>
<dbReference type="GeneID" id="962673"/>
<dbReference type="KEGG" id="vg:962673"/>
<dbReference type="OrthoDB" id="1460at10239"/>
<dbReference type="Proteomes" id="UP000001667">
    <property type="component" value="Genome"/>
</dbReference>
<dbReference type="GO" id="GO:0005524">
    <property type="term" value="F:ATP binding"/>
    <property type="evidence" value="ECO:0007669"/>
    <property type="project" value="UniProtKB-KW"/>
</dbReference>
<dbReference type="GO" id="GO:0016887">
    <property type="term" value="F:ATP hydrolysis activity"/>
    <property type="evidence" value="ECO:0007669"/>
    <property type="project" value="RHEA"/>
</dbReference>
<dbReference type="GO" id="GO:0008174">
    <property type="term" value="F:mRNA methyltransferase activity"/>
    <property type="evidence" value="ECO:0007669"/>
    <property type="project" value="InterPro"/>
</dbReference>
<dbReference type="GO" id="GO:0003723">
    <property type="term" value="F:RNA binding"/>
    <property type="evidence" value="ECO:0007669"/>
    <property type="project" value="InterPro"/>
</dbReference>
<dbReference type="GO" id="GO:0003724">
    <property type="term" value="F:RNA helicase activity"/>
    <property type="evidence" value="ECO:0007669"/>
    <property type="project" value="UniProtKB-EC"/>
</dbReference>
<dbReference type="GO" id="GO:0032259">
    <property type="term" value="P:methylation"/>
    <property type="evidence" value="ECO:0007669"/>
    <property type="project" value="UniProtKB-KW"/>
</dbReference>
<dbReference type="GO" id="GO:0016556">
    <property type="term" value="P:mRNA modification"/>
    <property type="evidence" value="ECO:0007669"/>
    <property type="project" value="InterPro"/>
</dbReference>
<dbReference type="GO" id="GO:0006396">
    <property type="term" value="P:RNA processing"/>
    <property type="evidence" value="ECO:0007669"/>
    <property type="project" value="InterPro"/>
</dbReference>
<dbReference type="Gene3D" id="3.40.50.300">
    <property type="entry name" value="P-loop containing nucleotide triphosphate hydrolases"/>
    <property type="match status" value="2"/>
</dbReference>
<dbReference type="InterPro" id="IPR027351">
    <property type="entry name" value="(+)RNA_virus_helicase_core_dom"/>
</dbReference>
<dbReference type="InterPro" id="IPR002588">
    <property type="entry name" value="Alphavirus-like_MT_dom"/>
</dbReference>
<dbReference type="InterPro" id="IPR027417">
    <property type="entry name" value="P-loop_NTPase"/>
</dbReference>
<dbReference type="Pfam" id="PF01443">
    <property type="entry name" value="Viral_helicase1"/>
    <property type="match status" value="1"/>
</dbReference>
<dbReference type="Pfam" id="PF01660">
    <property type="entry name" value="Vmethyltransf"/>
    <property type="match status" value="1"/>
</dbReference>
<dbReference type="PROSITE" id="PS51743">
    <property type="entry name" value="ALPHAVIRUS_MT"/>
    <property type="match status" value="1"/>
</dbReference>
<dbReference type="PROSITE" id="PS51657">
    <property type="entry name" value="PSRV_HELICASE"/>
    <property type="match status" value="1"/>
</dbReference>